<sequence>MEKYIMSLDQGTTSSRCIIFNKKGEIVSVAQKEFTQIYPKAGWVEHDPLEIWGKQAGVAGEALNIARISPEQIAGIGITNQRETTVVWNKRTGMPVYNAIVWQCRRTAGYCDELREKGIDKTIKEKTGLMLDAYFSATKIKWILDNVEGARELAEKGDLLFGNIDTWLIWNMTKGKIHVTDYTNASRTMLFNIHELKWDEELLEILDIPKSMLPEVKPSSCVYGETDEILFGVSIPIAGDAGDQQAALFGQTCFNAGMAKNTYGTGCFLLMNTGEKAVDSKNGLLTTIAVGIDGKVEYALEGSIFIGGAVIQWLRDELRMVKTAQETEKYATEVEDNNGVYLVPAFVGIGAPYWDSYARGTILGLTRGAKKEHIIRAALESMAYQTHDVLKAMEEDSGIELKALKVDGGACQNNFLMQFQSDILGVEVDRPEVVETTALGAAYLAGLAVGYWKDRNEISQNWAISRSFAPAMEDEKKEKLIKGWHKAVTKAMDWEERE</sequence>
<dbReference type="EC" id="2.7.1.30" evidence="1"/>
<dbReference type="EMBL" id="CP000727">
    <property type="protein sequence ID" value="ABS36875.1"/>
    <property type="molecule type" value="Genomic_DNA"/>
</dbReference>
<dbReference type="EMBL" id="AM412317">
    <property type="protein sequence ID" value="CAL84347.1"/>
    <property type="molecule type" value="Genomic_DNA"/>
</dbReference>
<dbReference type="RefSeq" id="WP_011987067.1">
    <property type="nucleotide sequence ID" value="NC_009698.1"/>
</dbReference>
<dbReference type="RefSeq" id="YP_001255285.1">
    <property type="nucleotide sequence ID" value="NC_009495.1"/>
</dbReference>
<dbReference type="RefSeq" id="YP_001388498.1">
    <property type="nucleotide sequence ID" value="NC_009698.1"/>
</dbReference>
<dbReference type="SMR" id="A5I5M0"/>
<dbReference type="GeneID" id="5185396"/>
<dbReference type="KEGG" id="cbh:CLC_2660"/>
<dbReference type="KEGG" id="cbo:CBO2784"/>
<dbReference type="PATRIC" id="fig|413999.7.peg.2768"/>
<dbReference type="HOGENOM" id="CLU_009281_2_3_9"/>
<dbReference type="UniPathway" id="UPA00618">
    <property type="reaction ID" value="UER00672"/>
</dbReference>
<dbReference type="PRO" id="PR:A5I5M0"/>
<dbReference type="Proteomes" id="UP000001986">
    <property type="component" value="Chromosome"/>
</dbReference>
<dbReference type="GO" id="GO:0005829">
    <property type="term" value="C:cytosol"/>
    <property type="evidence" value="ECO:0000318"/>
    <property type="project" value="GO_Central"/>
</dbReference>
<dbReference type="GO" id="GO:0005524">
    <property type="term" value="F:ATP binding"/>
    <property type="evidence" value="ECO:0007669"/>
    <property type="project" value="UniProtKB-UniRule"/>
</dbReference>
<dbReference type="GO" id="GO:0004370">
    <property type="term" value="F:glycerol kinase activity"/>
    <property type="evidence" value="ECO:0000250"/>
    <property type="project" value="UniProtKB"/>
</dbReference>
<dbReference type="GO" id="GO:0019563">
    <property type="term" value="P:glycerol catabolic process"/>
    <property type="evidence" value="ECO:0000318"/>
    <property type="project" value="GO_Central"/>
</dbReference>
<dbReference type="GO" id="GO:0006071">
    <property type="term" value="P:glycerol metabolic process"/>
    <property type="evidence" value="ECO:0000250"/>
    <property type="project" value="UniProtKB"/>
</dbReference>
<dbReference type="GO" id="GO:0006072">
    <property type="term" value="P:glycerol-3-phosphate metabolic process"/>
    <property type="evidence" value="ECO:0007669"/>
    <property type="project" value="InterPro"/>
</dbReference>
<dbReference type="CDD" id="cd07786">
    <property type="entry name" value="FGGY_EcGK_like"/>
    <property type="match status" value="1"/>
</dbReference>
<dbReference type="FunFam" id="3.30.420.40:FF:000007">
    <property type="entry name" value="Glycerol kinase"/>
    <property type="match status" value="1"/>
</dbReference>
<dbReference type="FunFam" id="3.30.420.40:FF:000008">
    <property type="entry name" value="Glycerol kinase"/>
    <property type="match status" value="1"/>
</dbReference>
<dbReference type="Gene3D" id="3.30.420.40">
    <property type="match status" value="2"/>
</dbReference>
<dbReference type="HAMAP" id="MF_00186">
    <property type="entry name" value="Glycerol_kin"/>
    <property type="match status" value="1"/>
</dbReference>
<dbReference type="InterPro" id="IPR043129">
    <property type="entry name" value="ATPase_NBD"/>
</dbReference>
<dbReference type="InterPro" id="IPR000577">
    <property type="entry name" value="Carb_kinase_FGGY"/>
</dbReference>
<dbReference type="InterPro" id="IPR018483">
    <property type="entry name" value="Carb_kinase_FGGY_CS"/>
</dbReference>
<dbReference type="InterPro" id="IPR018485">
    <property type="entry name" value="FGGY_C"/>
</dbReference>
<dbReference type="InterPro" id="IPR018484">
    <property type="entry name" value="FGGY_N"/>
</dbReference>
<dbReference type="InterPro" id="IPR005999">
    <property type="entry name" value="Glycerol_kin"/>
</dbReference>
<dbReference type="NCBIfam" id="TIGR01311">
    <property type="entry name" value="glycerol_kin"/>
    <property type="match status" value="1"/>
</dbReference>
<dbReference type="NCBIfam" id="NF000756">
    <property type="entry name" value="PRK00047.1"/>
    <property type="match status" value="1"/>
</dbReference>
<dbReference type="PANTHER" id="PTHR10196:SF69">
    <property type="entry name" value="GLYCEROL KINASE"/>
    <property type="match status" value="1"/>
</dbReference>
<dbReference type="PANTHER" id="PTHR10196">
    <property type="entry name" value="SUGAR KINASE"/>
    <property type="match status" value="1"/>
</dbReference>
<dbReference type="Pfam" id="PF02782">
    <property type="entry name" value="FGGY_C"/>
    <property type="match status" value="1"/>
</dbReference>
<dbReference type="Pfam" id="PF00370">
    <property type="entry name" value="FGGY_N"/>
    <property type="match status" value="1"/>
</dbReference>
<dbReference type="PIRSF" id="PIRSF000538">
    <property type="entry name" value="GlpK"/>
    <property type="match status" value="1"/>
</dbReference>
<dbReference type="SUPFAM" id="SSF53067">
    <property type="entry name" value="Actin-like ATPase domain"/>
    <property type="match status" value="2"/>
</dbReference>
<dbReference type="PROSITE" id="PS00933">
    <property type="entry name" value="FGGY_KINASES_1"/>
    <property type="match status" value="1"/>
</dbReference>
<dbReference type="PROSITE" id="PS00445">
    <property type="entry name" value="FGGY_KINASES_2"/>
    <property type="match status" value="1"/>
</dbReference>
<comment type="function">
    <text evidence="1">Key enzyme in the regulation of glycerol uptake and metabolism. Catalyzes the phosphorylation of glycerol to yield sn-glycerol 3-phosphate.</text>
</comment>
<comment type="catalytic activity">
    <reaction evidence="1">
        <text>glycerol + ATP = sn-glycerol 3-phosphate + ADP + H(+)</text>
        <dbReference type="Rhea" id="RHEA:21644"/>
        <dbReference type="ChEBI" id="CHEBI:15378"/>
        <dbReference type="ChEBI" id="CHEBI:17754"/>
        <dbReference type="ChEBI" id="CHEBI:30616"/>
        <dbReference type="ChEBI" id="CHEBI:57597"/>
        <dbReference type="ChEBI" id="CHEBI:456216"/>
        <dbReference type="EC" id="2.7.1.30"/>
    </reaction>
</comment>
<comment type="activity regulation">
    <text evidence="1">Activated by phosphorylation and inhibited by fructose 1,6-bisphosphate (FBP).</text>
</comment>
<comment type="pathway">
    <text evidence="1">Polyol metabolism; glycerol degradation via glycerol kinase pathway; sn-glycerol 3-phosphate from glycerol: step 1/1.</text>
</comment>
<comment type="subunit">
    <text evidence="1">Homotetramer and homodimer (in equilibrium).</text>
</comment>
<comment type="similarity">
    <text evidence="1">Belongs to the FGGY kinase family.</text>
</comment>
<feature type="chain" id="PRO_1000020720" description="Glycerol kinase">
    <location>
        <begin position="1"/>
        <end position="498"/>
    </location>
</feature>
<feature type="binding site" evidence="1">
    <location>
        <position position="12"/>
    </location>
    <ligand>
        <name>ADP</name>
        <dbReference type="ChEBI" id="CHEBI:456216"/>
    </ligand>
</feature>
<feature type="binding site" evidence="1">
    <location>
        <position position="12"/>
    </location>
    <ligand>
        <name>ATP</name>
        <dbReference type="ChEBI" id="CHEBI:30616"/>
    </ligand>
</feature>
<feature type="binding site" evidence="1">
    <location>
        <position position="12"/>
    </location>
    <ligand>
        <name>sn-glycerol 3-phosphate</name>
        <dbReference type="ChEBI" id="CHEBI:57597"/>
    </ligand>
</feature>
<feature type="binding site" evidence="1">
    <location>
        <position position="13"/>
    </location>
    <ligand>
        <name>ATP</name>
        <dbReference type="ChEBI" id="CHEBI:30616"/>
    </ligand>
</feature>
<feature type="binding site" evidence="1">
    <location>
        <position position="14"/>
    </location>
    <ligand>
        <name>ATP</name>
        <dbReference type="ChEBI" id="CHEBI:30616"/>
    </ligand>
</feature>
<feature type="binding site" evidence="1">
    <location>
        <position position="16"/>
    </location>
    <ligand>
        <name>ADP</name>
        <dbReference type="ChEBI" id="CHEBI:456216"/>
    </ligand>
</feature>
<feature type="binding site" evidence="1">
    <location>
        <position position="82"/>
    </location>
    <ligand>
        <name>glycerol</name>
        <dbReference type="ChEBI" id="CHEBI:17754"/>
    </ligand>
</feature>
<feature type="binding site" evidence="1">
    <location>
        <position position="82"/>
    </location>
    <ligand>
        <name>sn-glycerol 3-phosphate</name>
        <dbReference type="ChEBI" id="CHEBI:57597"/>
    </ligand>
</feature>
<feature type="binding site" evidence="1">
    <location>
        <position position="83"/>
    </location>
    <ligand>
        <name>glycerol</name>
        <dbReference type="ChEBI" id="CHEBI:17754"/>
    </ligand>
</feature>
<feature type="binding site" evidence="1">
    <location>
        <position position="83"/>
    </location>
    <ligand>
        <name>sn-glycerol 3-phosphate</name>
        <dbReference type="ChEBI" id="CHEBI:57597"/>
    </ligand>
</feature>
<feature type="binding site" evidence="1">
    <location>
        <position position="134"/>
    </location>
    <ligand>
        <name>glycerol</name>
        <dbReference type="ChEBI" id="CHEBI:17754"/>
    </ligand>
</feature>
<feature type="binding site" evidence="1">
    <location>
        <position position="134"/>
    </location>
    <ligand>
        <name>sn-glycerol 3-phosphate</name>
        <dbReference type="ChEBI" id="CHEBI:57597"/>
    </ligand>
</feature>
<feature type="binding site" evidence="1">
    <location>
        <position position="243"/>
    </location>
    <ligand>
        <name>glycerol</name>
        <dbReference type="ChEBI" id="CHEBI:17754"/>
    </ligand>
</feature>
<feature type="binding site" evidence="1">
    <location>
        <position position="243"/>
    </location>
    <ligand>
        <name>sn-glycerol 3-phosphate</name>
        <dbReference type="ChEBI" id="CHEBI:57597"/>
    </ligand>
</feature>
<feature type="binding site" evidence="1">
    <location>
        <position position="244"/>
    </location>
    <ligand>
        <name>glycerol</name>
        <dbReference type="ChEBI" id="CHEBI:17754"/>
    </ligand>
</feature>
<feature type="binding site" evidence="1">
    <location>
        <position position="265"/>
    </location>
    <ligand>
        <name>ADP</name>
        <dbReference type="ChEBI" id="CHEBI:456216"/>
    </ligand>
</feature>
<feature type="binding site" evidence="1">
    <location>
        <position position="265"/>
    </location>
    <ligand>
        <name>ATP</name>
        <dbReference type="ChEBI" id="CHEBI:30616"/>
    </ligand>
</feature>
<feature type="binding site" evidence="1">
    <location>
        <position position="308"/>
    </location>
    <ligand>
        <name>ADP</name>
        <dbReference type="ChEBI" id="CHEBI:456216"/>
    </ligand>
</feature>
<feature type="binding site" evidence="1">
    <location>
        <position position="308"/>
    </location>
    <ligand>
        <name>ATP</name>
        <dbReference type="ChEBI" id="CHEBI:30616"/>
    </ligand>
</feature>
<feature type="binding site" evidence="1">
    <location>
        <position position="312"/>
    </location>
    <ligand>
        <name>ATP</name>
        <dbReference type="ChEBI" id="CHEBI:30616"/>
    </ligand>
</feature>
<feature type="binding site" evidence="1">
    <location>
        <position position="409"/>
    </location>
    <ligand>
        <name>ADP</name>
        <dbReference type="ChEBI" id="CHEBI:456216"/>
    </ligand>
</feature>
<feature type="binding site" evidence="1">
    <location>
        <position position="409"/>
    </location>
    <ligand>
        <name>ATP</name>
        <dbReference type="ChEBI" id="CHEBI:30616"/>
    </ligand>
</feature>
<feature type="binding site" evidence="1">
    <location>
        <position position="413"/>
    </location>
    <ligand>
        <name>ADP</name>
        <dbReference type="ChEBI" id="CHEBI:456216"/>
    </ligand>
</feature>
<name>GLPK_CLOBH</name>
<accession>A5I5M0</accession>
<accession>A7G6T3</accession>
<organism>
    <name type="scientific">Clostridium botulinum (strain Hall / ATCC 3502 / NCTC 13319 / Type A)</name>
    <dbReference type="NCBI Taxonomy" id="441771"/>
    <lineage>
        <taxon>Bacteria</taxon>
        <taxon>Bacillati</taxon>
        <taxon>Bacillota</taxon>
        <taxon>Clostridia</taxon>
        <taxon>Eubacteriales</taxon>
        <taxon>Clostridiaceae</taxon>
        <taxon>Clostridium</taxon>
    </lineage>
</organism>
<protein>
    <recommendedName>
        <fullName evidence="1">Glycerol kinase</fullName>
        <ecNumber evidence="1">2.7.1.30</ecNumber>
    </recommendedName>
    <alternativeName>
        <fullName evidence="1">ATP:glycerol 3-phosphotransferase</fullName>
    </alternativeName>
    <alternativeName>
        <fullName evidence="1">Glycerokinase</fullName>
        <shortName evidence="1">GK</shortName>
    </alternativeName>
</protein>
<gene>
    <name evidence="1" type="primary">glpK</name>
    <name type="ordered locus">CBO2784</name>
    <name type="ordered locus">CLC_2660</name>
</gene>
<evidence type="ECO:0000255" key="1">
    <source>
        <dbReference type="HAMAP-Rule" id="MF_00186"/>
    </source>
</evidence>
<keyword id="KW-0067">ATP-binding</keyword>
<keyword id="KW-0319">Glycerol metabolism</keyword>
<keyword id="KW-0418">Kinase</keyword>
<keyword id="KW-0547">Nucleotide-binding</keyword>
<keyword id="KW-1185">Reference proteome</keyword>
<keyword id="KW-0808">Transferase</keyword>
<proteinExistence type="inferred from homology"/>
<reference key="1">
    <citation type="journal article" date="2007" name="Genome Res.">
        <title>Genome sequence of a proteolytic (Group I) Clostridium botulinum strain Hall A and comparative analysis of the clostridial genomes.</title>
        <authorList>
            <person name="Sebaihia M."/>
            <person name="Peck M.W."/>
            <person name="Minton N.P."/>
            <person name="Thomson N.R."/>
            <person name="Holden M.T.G."/>
            <person name="Mitchell W.J."/>
            <person name="Carter A.T."/>
            <person name="Bentley S.D."/>
            <person name="Mason D.R."/>
            <person name="Crossman L."/>
            <person name="Paul C.J."/>
            <person name="Ivens A."/>
            <person name="Wells-Bennik M.H.J."/>
            <person name="Davis I.J."/>
            <person name="Cerdeno-Tarraga A.M."/>
            <person name="Churcher C."/>
            <person name="Quail M.A."/>
            <person name="Chillingworth T."/>
            <person name="Feltwell T."/>
            <person name="Fraser A."/>
            <person name="Goodhead I."/>
            <person name="Hance Z."/>
            <person name="Jagels K."/>
            <person name="Larke N."/>
            <person name="Maddison M."/>
            <person name="Moule S."/>
            <person name="Mungall K."/>
            <person name="Norbertczak H."/>
            <person name="Rabbinowitsch E."/>
            <person name="Sanders M."/>
            <person name="Simmonds M."/>
            <person name="White B."/>
            <person name="Whithead S."/>
            <person name="Parkhill J."/>
        </authorList>
    </citation>
    <scope>NUCLEOTIDE SEQUENCE [LARGE SCALE GENOMIC DNA]</scope>
    <source>
        <strain>Hall / ATCC 3502 / NCTC 13319 / Type A</strain>
    </source>
</reference>
<reference key="2">
    <citation type="journal article" date="2007" name="PLoS ONE">
        <title>Analysis of the neurotoxin complex genes in Clostridium botulinum A1-A4 and B1 strains: BoNT/A3, /Ba4 and /B1 clusters are located within plasmids.</title>
        <authorList>
            <person name="Smith T.J."/>
            <person name="Hill K.K."/>
            <person name="Foley B.T."/>
            <person name="Detter J.C."/>
            <person name="Munk A.C."/>
            <person name="Bruce D.C."/>
            <person name="Doggett N.A."/>
            <person name="Smith L.A."/>
            <person name="Marks J.D."/>
            <person name="Xie G."/>
            <person name="Brettin T.S."/>
        </authorList>
    </citation>
    <scope>NUCLEOTIDE SEQUENCE [LARGE SCALE GENOMIC DNA]</scope>
    <source>
        <strain>Hall / ATCC 3502 / NCTC 13319 / Type A</strain>
    </source>
</reference>